<proteinExistence type="inferred from homology"/>
<feature type="chain" id="PRO_0000381265" description="Biotin synthase">
    <location>
        <begin position="1"/>
        <end position="336"/>
    </location>
</feature>
<feature type="domain" description="Radical SAM core" evidence="2">
    <location>
        <begin position="54"/>
        <end position="281"/>
    </location>
</feature>
<feature type="binding site" evidence="1">
    <location>
        <position position="69"/>
    </location>
    <ligand>
        <name>[4Fe-4S] cluster</name>
        <dbReference type="ChEBI" id="CHEBI:49883"/>
        <note>4Fe-4S-S-AdoMet</note>
    </ligand>
</feature>
<feature type="binding site" evidence="1">
    <location>
        <position position="73"/>
    </location>
    <ligand>
        <name>[4Fe-4S] cluster</name>
        <dbReference type="ChEBI" id="CHEBI:49883"/>
        <note>4Fe-4S-S-AdoMet</note>
    </ligand>
</feature>
<feature type="binding site" evidence="1">
    <location>
        <position position="76"/>
    </location>
    <ligand>
        <name>[4Fe-4S] cluster</name>
        <dbReference type="ChEBI" id="CHEBI:49883"/>
        <note>4Fe-4S-S-AdoMet</note>
    </ligand>
</feature>
<feature type="binding site" evidence="1">
    <location>
        <position position="113"/>
    </location>
    <ligand>
        <name>[2Fe-2S] cluster</name>
        <dbReference type="ChEBI" id="CHEBI:190135"/>
    </ligand>
</feature>
<feature type="binding site" evidence="1">
    <location>
        <position position="144"/>
    </location>
    <ligand>
        <name>[2Fe-2S] cluster</name>
        <dbReference type="ChEBI" id="CHEBI:190135"/>
    </ligand>
</feature>
<feature type="binding site" evidence="1">
    <location>
        <position position="204"/>
    </location>
    <ligand>
        <name>[2Fe-2S] cluster</name>
        <dbReference type="ChEBI" id="CHEBI:190135"/>
    </ligand>
</feature>
<feature type="binding site" evidence="1">
    <location>
        <position position="276"/>
    </location>
    <ligand>
        <name>[2Fe-2S] cluster</name>
        <dbReference type="ChEBI" id="CHEBI:190135"/>
    </ligand>
</feature>
<gene>
    <name evidence="1" type="primary">bioB</name>
    <name type="ordered locus">BMA10247_2269</name>
</gene>
<keyword id="KW-0001">2Fe-2S</keyword>
<keyword id="KW-0004">4Fe-4S</keyword>
<keyword id="KW-0093">Biotin biosynthesis</keyword>
<keyword id="KW-0408">Iron</keyword>
<keyword id="KW-0411">Iron-sulfur</keyword>
<keyword id="KW-0479">Metal-binding</keyword>
<keyword id="KW-0949">S-adenosyl-L-methionine</keyword>
<keyword id="KW-0808">Transferase</keyword>
<name>BIOB_BURM7</name>
<protein>
    <recommendedName>
        <fullName evidence="1">Biotin synthase</fullName>
        <ecNumber evidence="1">2.8.1.6</ecNumber>
    </recommendedName>
</protein>
<sequence length="336" mass="36668">MTEAQTACATTETPVAAPAAPRWRVADVIALYELPFNDLLFRAQQTHREHFDANAIQLSTLLSIKTGGCEEDCGYCSQSAHHDTGLKAEKLMEVDAVLAAARTAKENGATRFCMGAAWRNPKDRHIEPIKEMIRGVKDMGLETCVTLGMLEEHQAKALAEAGLDYYNHNLDTSPEFYGQIISTRTYQDRLDTLERVRDAGINVCCGGIIGMGESRRERAGLIAQLANMNPYPESVPINNLVAIEGTPLENAQALDPFEFVRTIAVARITMPKAMVRLSAGREQLDDAMQALCFLAGANSMFYGDVLLTTGNPRAEADRKLLARLGMSASEASQLSA</sequence>
<evidence type="ECO:0000255" key="1">
    <source>
        <dbReference type="HAMAP-Rule" id="MF_01694"/>
    </source>
</evidence>
<evidence type="ECO:0000255" key="2">
    <source>
        <dbReference type="PROSITE-ProRule" id="PRU01266"/>
    </source>
</evidence>
<evidence type="ECO:0000305" key="3"/>
<dbReference type="EC" id="2.8.1.6" evidence="1"/>
<dbReference type="EMBL" id="CP000548">
    <property type="protein sequence ID" value="ABO06111.1"/>
    <property type="status" value="ALT_INIT"/>
    <property type="molecule type" value="Genomic_DNA"/>
</dbReference>
<dbReference type="RefSeq" id="WP_004200336.1">
    <property type="nucleotide sequence ID" value="NZ_CP007802.1"/>
</dbReference>
<dbReference type="SMR" id="A3MNG1"/>
<dbReference type="GeneID" id="93058882"/>
<dbReference type="KEGG" id="bmaz:BM44_984"/>
<dbReference type="KEGG" id="bmn:BMA10247_2269"/>
<dbReference type="PATRIC" id="fig|320389.8.peg.1093"/>
<dbReference type="UniPathway" id="UPA00078">
    <property type="reaction ID" value="UER00162"/>
</dbReference>
<dbReference type="GO" id="GO:0051537">
    <property type="term" value="F:2 iron, 2 sulfur cluster binding"/>
    <property type="evidence" value="ECO:0007669"/>
    <property type="project" value="UniProtKB-KW"/>
</dbReference>
<dbReference type="GO" id="GO:0051539">
    <property type="term" value="F:4 iron, 4 sulfur cluster binding"/>
    <property type="evidence" value="ECO:0007669"/>
    <property type="project" value="UniProtKB-KW"/>
</dbReference>
<dbReference type="GO" id="GO:0004076">
    <property type="term" value="F:biotin synthase activity"/>
    <property type="evidence" value="ECO:0007669"/>
    <property type="project" value="UniProtKB-UniRule"/>
</dbReference>
<dbReference type="GO" id="GO:0005506">
    <property type="term" value="F:iron ion binding"/>
    <property type="evidence" value="ECO:0007669"/>
    <property type="project" value="UniProtKB-UniRule"/>
</dbReference>
<dbReference type="GO" id="GO:0009102">
    <property type="term" value="P:biotin biosynthetic process"/>
    <property type="evidence" value="ECO:0007669"/>
    <property type="project" value="UniProtKB-UniRule"/>
</dbReference>
<dbReference type="CDD" id="cd01335">
    <property type="entry name" value="Radical_SAM"/>
    <property type="match status" value="1"/>
</dbReference>
<dbReference type="FunFam" id="3.20.20.70:FF:000011">
    <property type="entry name" value="Biotin synthase"/>
    <property type="match status" value="1"/>
</dbReference>
<dbReference type="Gene3D" id="3.20.20.70">
    <property type="entry name" value="Aldolase class I"/>
    <property type="match status" value="1"/>
</dbReference>
<dbReference type="HAMAP" id="MF_01694">
    <property type="entry name" value="BioB"/>
    <property type="match status" value="1"/>
</dbReference>
<dbReference type="InterPro" id="IPR013785">
    <property type="entry name" value="Aldolase_TIM"/>
</dbReference>
<dbReference type="InterPro" id="IPR010722">
    <property type="entry name" value="BATS_dom"/>
</dbReference>
<dbReference type="InterPro" id="IPR002684">
    <property type="entry name" value="Biotin_synth/BioAB"/>
</dbReference>
<dbReference type="InterPro" id="IPR024177">
    <property type="entry name" value="Biotin_synthase"/>
</dbReference>
<dbReference type="InterPro" id="IPR006638">
    <property type="entry name" value="Elp3/MiaA/NifB-like_rSAM"/>
</dbReference>
<dbReference type="InterPro" id="IPR007197">
    <property type="entry name" value="rSAM"/>
</dbReference>
<dbReference type="NCBIfam" id="TIGR00433">
    <property type="entry name" value="bioB"/>
    <property type="match status" value="1"/>
</dbReference>
<dbReference type="PANTHER" id="PTHR22976">
    <property type="entry name" value="BIOTIN SYNTHASE"/>
    <property type="match status" value="1"/>
</dbReference>
<dbReference type="PANTHER" id="PTHR22976:SF2">
    <property type="entry name" value="BIOTIN SYNTHASE, MITOCHONDRIAL"/>
    <property type="match status" value="1"/>
</dbReference>
<dbReference type="Pfam" id="PF06968">
    <property type="entry name" value="BATS"/>
    <property type="match status" value="1"/>
</dbReference>
<dbReference type="Pfam" id="PF04055">
    <property type="entry name" value="Radical_SAM"/>
    <property type="match status" value="1"/>
</dbReference>
<dbReference type="PIRSF" id="PIRSF001619">
    <property type="entry name" value="Biotin_synth"/>
    <property type="match status" value="1"/>
</dbReference>
<dbReference type="SFLD" id="SFLDF00272">
    <property type="entry name" value="biotin_synthase"/>
    <property type="match status" value="1"/>
</dbReference>
<dbReference type="SFLD" id="SFLDS00029">
    <property type="entry name" value="Radical_SAM"/>
    <property type="match status" value="1"/>
</dbReference>
<dbReference type="SMART" id="SM00876">
    <property type="entry name" value="BATS"/>
    <property type="match status" value="1"/>
</dbReference>
<dbReference type="SMART" id="SM00729">
    <property type="entry name" value="Elp3"/>
    <property type="match status" value="1"/>
</dbReference>
<dbReference type="SUPFAM" id="SSF102114">
    <property type="entry name" value="Radical SAM enzymes"/>
    <property type="match status" value="1"/>
</dbReference>
<dbReference type="PROSITE" id="PS51918">
    <property type="entry name" value="RADICAL_SAM"/>
    <property type="match status" value="1"/>
</dbReference>
<organism>
    <name type="scientific">Burkholderia mallei (strain NCTC 10247)</name>
    <dbReference type="NCBI Taxonomy" id="320389"/>
    <lineage>
        <taxon>Bacteria</taxon>
        <taxon>Pseudomonadati</taxon>
        <taxon>Pseudomonadota</taxon>
        <taxon>Betaproteobacteria</taxon>
        <taxon>Burkholderiales</taxon>
        <taxon>Burkholderiaceae</taxon>
        <taxon>Burkholderia</taxon>
        <taxon>pseudomallei group</taxon>
    </lineage>
</organism>
<accession>A3MNG1</accession>
<reference key="1">
    <citation type="journal article" date="2010" name="Genome Biol. Evol.">
        <title>Continuing evolution of Burkholderia mallei through genome reduction and large-scale rearrangements.</title>
        <authorList>
            <person name="Losada L."/>
            <person name="Ronning C.M."/>
            <person name="DeShazer D."/>
            <person name="Woods D."/>
            <person name="Fedorova N."/>
            <person name="Kim H.S."/>
            <person name="Shabalina S.A."/>
            <person name="Pearson T.R."/>
            <person name="Brinkac L."/>
            <person name="Tan P."/>
            <person name="Nandi T."/>
            <person name="Crabtree J."/>
            <person name="Badger J."/>
            <person name="Beckstrom-Sternberg S."/>
            <person name="Saqib M."/>
            <person name="Schutzer S.E."/>
            <person name="Keim P."/>
            <person name="Nierman W.C."/>
        </authorList>
    </citation>
    <scope>NUCLEOTIDE SEQUENCE [LARGE SCALE GENOMIC DNA]</scope>
    <source>
        <strain>NCTC 10247</strain>
    </source>
</reference>
<comment type="function">
    <text evidence="1">Catalyzes the conversion of dethiobiotin (DTB) to biotin by the insertion of a sulfur atom into dethiobiotin via a radical-based mechanism.</text>
</comment>
<comment type="catalytic activity">
    <reaction evidence="1">
        <text>(4R,5S)-dethiobiotin + (sulfur carrier)-SH + 2 reduced [2Fe-2S]-[ferredoxin] + 2 S-adenosyl-L-methionine = (sulfur carrier)-H + biotin + 2 5'-deoxyadenosine + 2 L-methionine + 2 oxidized [2Fe-2S]-[ferredoxin]</text>
        <dbReference type="Rhea" id="RHEA:22060"/>
        <dbReference type="Rhea" id="RHEA-COMP:10000"/>
        <dbReference type="Rhea" id="RHEA-COMP:10001"/>
        <dbReference type="Rhea" id="RHEA-COMP:14737"/>
        <dbReference type="Rhea" id="RHEA-COMP:14739"/>
        <dbReference type="ChEBI" id="CHEBI:17319"/>
        <dbReference type="ChEBI" id="CHEBI:29917"/>
        <dbReference type="ChEBI" id="CHEBI:33737"/>
        <dbReference type="ChEBI" id="CHEBI:33738"/>
        <dbReference type="ChEBI" id="CHEBI:57586"/>
        <dbReference type="ChEBI" id="CHEBI:57844"/>
        <dbReference type="ChEBI" id="CHEBI:59789"/>
        <dbReference type="ChEBI" id="CHEBI:64428"/>
        <dbReference type="ChEBI" id="CHEBI:149473"/>
        <dbReference type="EC" id="2.8.1.6"/>
    </reaction>
</comment>
<comment type="cofactor">
    <cofactor evidence="1">
        <name>[4Fe-4S] cluster</name>
        <dbReference type="ChEBI" id="CHEBI:49883"/>
    </cofactor>
    <text evidence="1">Binds 1 [4Fe-4S] cluster. The cluster is coordinated with 3 cysteines and an exchangeable S-adenosyl-L-methionine.</text>
</comment>
<comment type="cofactor">
    <cofactor evidence="1">
        <name>[2Fe-2S] cluster</name>
        <dbReference type="ChEBI" id="CHEBI:190135"/>
    </cofactor>
    <text evidence="1">Binds 1 [2Fe-2S] cluster. The cluster is coordinated with 3 cysteines and 1 arginine.</text>
</comment>
<comment type="pathway">
    <text evidence="1">Cofactor biosynthesis; biotin biosynthesis; biotin from 7,8-diaminononanoate: step 2/2.</text>
</comment>
<comment type="subunit">
    <text evidence="1">Homodimer.</text>
</comment>
<comment type="similarity">
    <text evidence="1">Belongs to the radical SAM superfamily. Biotin synthase family.</text>
</comment>
<comment type="sequence caution" evidence="3">
    <conflict type="erroneous initiation">
        <sequence resource="EMBL-CDS" id="ABO06111"/>
    </conflict>
</comment>